<proteinExistence type="inferred from homology"/>
<reference key="1">
    <citation type="submission" date="1998-04" db="EMBL/GenBank/DDBJ databases">
        <authorList>
            <person name="Noorani S.M."/>
            <person name="Lindahl L."/>
            <person name="Zengel J.M."/>
        </authorList>
    </citation>
    <scope>NUCLEOTIDE SEQUENCE [GENOMIC DNA]</scope>
    <source>
        <strain>LT2</strain>
    </source>
</reference>
<reference key="2">
    <citation type="journal article" date="2001" name="Nature">
        <title>Complete genome sequence of Salmonella enterica serovar Typhimurium LT2.</title>
        <authorList>
            <person name="McClelland M."/>
            <person name="Sanderson K.E."/>
            <person name="Spieth J."/>
            <person name="Clifton S.W."/>
            <person name="Latreille P."/>
            <person name="Courtney L."/>
            <person name="Porwollik S."/>
            <person name="Ali J."/>
            <person name="Dante M."/>
            <person name="Du F."/>
            <person name="Hou S."/>
            <person name="Layman D."/>
            <person name="Leonard S."/>
            <person name="Nguyen C."/>
            <person name="Scott K."/>
            <person name="Holmes A."/>
            <person name="Grewal N."/>
            <person name="Mulvaney E."/>
            <person name="Ryan E."/>
            <person name="Sun H."/>
            <person name="Florea L."/>
            <person name="Miller W."/>
            <person name="Stoneking T."/>
            <person name="Nhan M."/>
            <person name="Waterston R."/>
            <person name="Wilson R.K."/>
        </authorList>
    </citation>
    <scope>NUCLEOTIDE SEQUENCE [LARGE SCALE GENOMIC DNA]</scope>
    <source>
        <strain>LT2 / SGSC1412 / ATCC 700720</strain>
    </source>
</reference>
<evidence type="ECO:0000250" key="1"/>
<evidence type="ECO:0000250" key="2">
    <source>
        <dbReference type="UniProtKB" id="Q9HY80"/>
    </source>
</evidence>
<evidence type="ECO:0000305" key="3"/>
<sequence length="64" mass="7459">MYVCLCNGISDKKIRQAVRQFHPQSFQQLRKFIPVGNQCGKCIRAAREVMQDELTQMPEFKEIA</sequence>
<dbReference type="EMBL" id="AF058449">
    <property type="protein sequence ID" value="AAC14282.1"/>
    <property type="molecule type" value="Genomic_DNA"/>
</dbReference>
<dbReference type="EMBL" id="AE006468">
    <property type="protein sequence ID" value="AAL22307.1"/>
    <property type="molecule type" value="Genomic_DNA"/>
</dbReference>
<dbReference type="RefSeq" id="NP_462348.1">
    <property type="nucleotide sequence ID" value="NC_003197.2"/>
</dbReference>
<dbReference type="RefSeq" id="WP_000289082.1">
    <property type="nucleotide sequence ID" value="NC_003197.2"/>
</dbReference>
<dbReference type="SMR" id="P0A1Z6"/>
<dbReference type="STRING" id="99287.STM3444"/>
<dbReference type="PaxDb" id="99287-STM3444"/>
<dbReference type="GeneID" id="1254967"/>
<dbReference type="KEGG" id="stm:STM3444"/>
<dbReference type="PATRIC" id="fig|99287.12.peg.3641"/>
<dbReference type="HOGENOM" id="CLU_159205_3_4_6"/>
<dbReference type="OMA" id="CLCTGVT"/>
<dbReference type="PhylomeDB" id="P0A1Z6"/>
<dbReference type="BioCyc" id="SENT99287:STM3444-MONOMER"/>
<dbReference type="Proteomes" id="UP000001014">
    <property type="component" value="Chromosome"/>
</dbReference>
<dbReference type="GO" id="GO:0051537">
    <property type="term" value="F:2 iron, 2 sulfur cluster binding"/>
    <property type="evidence" value="ECO:0000318"/>
    <property type="project" value="GO_Central"/>
</dbReference>
<dbReference type="GO" id="GO:0046872">
    <property type="term" value="F:metal ion binding"/>
    <property type="evidence" value="ECO:0007669"/>
    <property type="project" value="UniProtKB-KW"/>
</dbReference>
<dbReference type="CDD" id="cd19945">
    <property type="entry name" value="Fer2_BFD"/>
    <property type="match status" value="1"/>
</dbReference>
<dbReference type="FunFam" id="1.10.10.1100:FF:000001">
    <property type="entry name" value="Bacterioferritin-associated ferredoxin"/>
    <property type="match status" value="1"/>
</dbReference>
<dbReference type="Gene3D" id="1.10.10.1100">
    <property type="entry name" value="BFD-like [2Fe-2S]-binding domain"/>
    <property type="match status" value="1"/>
</dbReference>
<dbReference type="InterPro" id="IPR052371">
    <property type="entry name" value="BFD-associated_ferredoxin"/>
</dbReference>
<dbReference type="InterPro" id="IPR007419">
    <property type="entry name" value="BFD-like_2Fe2S-bd_dom"/>
</dbReference>
<dbReference type="InterPro" id="IPR041854">
    <property type="entry name" value="BFD-like_2Fe2S-bd_dom_sf"/>
</dbReference>
<dbReference type="NCBIfam" id="NF007803">
    <property type="entry name" value="PRK10509.1"/>
    <property type="match status" value="1"/>
</dbReference>
<dbReference type="PANTHER" id="PTHR37424">
    <property type="entry name" value="BACTERIOFERRITIN-ASSOCIATED FERREDOXIN"/>
    <property type="match status" value="1"/>
</dbReference>
<dbReference type="PANTHER" id="PTHR37424:SF1">
    <property type="entry name" value="BACTERIOFERRITIN-ASSOCIATED FERREDOXIN"/>
    <property type="match status" value="1"/>
</dbReference>
<dbReference type="Pfam" id="PF04324">
    <property type="entry name" value="Fer2_BFD"/>
    <property type="match status" value="1"/>
</dbReference>
<keyword id="KW-0001">2Fe-2S</keyword>
<keyword id="KW-0249">Electron transport</keyword>
<keyword id="KW-0408">Iron</keyword>
<keyword id="KW-0411">Iron-sulfur</keyword>
<keyword id="KW-0479">Metal-binding</keyword>
<keyword id="KW-1185">Reference proteome</keyword>
<keyword id="KW-0813">Transport</keyword>
<protein>
    <recommendedName>
        <fullName>Bacterioferritin-associated ferredoxin</fullName>
    </recommendedName>
</protein>
<comment type="function">
    <text evidence="2">Required for mobilization of iron from the bacterioferritin (BFR) complex (By similarity).</text>
</comment>
<comment type="cofactor">
    <cofactor evidence="2">
        <name>[2Fe-2S] cluster</name>
        <dbReference type="ChEBI" id="CHEBI:190135"/>
    </cofactor>
    <text evidence="1 2">Binds 1 [2Fe-2S] cluster.</text>
</comment>
<comment type="subunit">
    <text evidence="2">Monomer (By similarity). Interacts with bacterioferritin (BFR); up to 12 Bfd proteins can bind to the BFR (By similarity).</text>
</comment>
<comment type="similarity">
    <text evidence="3">Belongs to the Bfd family.</text>
</comment>
<name>BFD_SALTY</name>
<organism>
    <name type="scientific">Salmonella typhimurium (strain LT2 / SGSC1412 / ATCC 700720)</name>
    <dbReference type="NCBI Taxonomy" id="99287"/>
    <lineage>
        <taxon>Bacteria</taxon>
        <taxon>Pseudomonadati</taxon>
        <taxon>Pseudomonadota</taxon>
        <taxon>Gammaproteobacteria</taxon>
        <taxon>Enterobacterales</taxon>
        <taxon>Enterobacteriaceae</taxon>
        <taxon>Salmonella</taxon>
    </lineage>
</organism>
<feature type="chain" id="PRO_0000064917" description="Bacterioferritin-associated ferredoxin">
    <location>
        <begin position="1"/>
        <end position="64"/>
    </location>
</feature>
<feature type="binding site" evidence="2">
    <location>
        <position position="4"/>
    </location>
    <ligand>
        <name>[2Fe-2S] cluster</name>
        <dbReference type="ChEBI" id="CHEBI:190135"/>
    </ligand>
</feature>
<feature type="binding site" evidence="2">
    <location>
        <position position="6"/>
    </location>
    <ligand>
        <name>[2Fe-2S] cluster</name>
        <dbReference type="ChEBI" id="CHEBI:190135"/>
    </ligand>
</feature>
<feature type="binding site" evidence="2">
    <location>
        <position position="39"/>
    </location>
    <ligand>
        <name>[2Fe-2S] cluster</name>
        <dbReference type="ChEBI" id="CHEBI:190135"/>
    </ligand>
</feature>
<feature type="binding site" evidence="2">
    <location>
        <position position="42"/>
    </location>
    <ligand>
        <name>[2Fe-2S] cluster</name>
        <dbReference type="ChEBI" id="CHEBI:190135"/>
    </ligand>
</feature>
<accession>P0A1Z6</accession>
<accession>O68925</accession>
<gene>
    <name type="primary">bfd</name>
    <name type="ordered locus">STM3444</name>
</gene>